<evidence type="ECO:0000255" key="1">
    <source>
        <dbReference type="PROSITE-ProRule" id="PRU00742"/>
    </source>
</evidence>
<evidence type="ECO:0000255" key="2">
    <source>
        <dbReference type="RuleBase" id="RU361159"/>
    </source>
</evidence>
<evidence type="ECO:0000269" key="3">
    <source>
    </source>
</evidence>
<evidence type="ECO:0000269" key="4">
    <source>
    </source>
</evidence>
<evidence type="ECO:0000269" key="5">
    <source>
    </source>
</evidence>
<evidence type="ECO:0000303" key="6">
    <source>
    </source>
</evidence>
<evidence type="ECO:0000305" key="7"/>
<evidence type="ECO:0000305" key="8">
    <source>
    </source>
</evidence>
<evidence type="ECO:0000305" key="9">
    <source>
    </source>
</evidence>
<evidence type="ECO:0000312" key="10">
    <source>
        <dbReference type="EMBL" id="EAL51512.1"/>
    </source>
</evidence>
<evidence type="ECO:0007744" key="11">
    <source>
        <dbReference type="PDB" id="5ZEE"/>
    </source>
</evidence>
<evidence type="ECO:0007744" key="12">
    <source>
        <dbReference type="PDB" id="5ZEF"/>
    </source>
</evidence>
<evidence type="ECO:0007744" key="13">
    <source>
        <dbReference type="PDB" id="5ZEH"/>
    </source>
</evidence>
<evidence type="ECO:0007829" key="14">
    <source>
        <dbReference type="PDB" id="5ZEE"/>
    </source>
</evidence>
<reference evidence="10" key="1">
    <citation type="journal article" date="2005" name="Nature">
        <title>The genome of the protist parasite Entamoeba histolytica.</title>
        <authorList>
            <person name="Loftus B.J."/>
            <person name="Anderson I."/>
            <person name="Davies R."/>
            <person name="Alsmark U.C."/>
            <person name="Samuelson J."/>
            <person name="Amedeo P."/>
            <person name="Roncaglia P."/>
            <person name="Berriman M."/>
            <person name="Hirt R.P."/>
            <person name="Mann B.J."/>
            <person name="Nozaki T."/>
            <person name="Suh B."/>
            <person name="Pop M."/>
            <person name="Duchene M."/>
            <person name="Ackers J."/>
            <person name="Tannich E."/>
            <person name="Leippe M."/>
            <person name="Hofer M."/>
            <person name="Bruchhaus I."/>
            <person name="Willhoeft U."/>
            <person name="Bhattacharya A."/>
            <person name="Chillingworth T."/>
            <person name="Churcher C.M."/>
            <person name="Hance Z."/>
            <person name="Harris B."/>
            <person name="Harris D."/>
            <person name="Jagels K."/>
            <person name="Moule S."/>
            <person name="Mungall K.L."/>
            <person name="Ormond D."/>
            <person name="Squares R."/>
            <person name="Whitehead S."/>
            <person name="Quail M.A."/>
            <person name="Rabbinowitsch E."/>
            <person name="Norbertczak H."/>
            <person name="Price C."/>
            <person name="Wang Z."/>
            <person name="Guillen N."/>
            <person name="Gilchrist C."/>
            <person name="Stroup S.E."/>
            <person name="Bhattacharya S."/>
            <person name="Lohia A."/>
            <person name="Foster P.G."/>
            <person name="Sicheritz-Ponten T."/>
            <person name="Weber C."/>
            <person name="Singh U."/>
            <person name="Mukherjee C."/>
            <person name="El-Sayed N.M.A."/>
            <person name="Petri W.A."/>
            <person name="Clark C.G."/>
            <person name="Embley T.M."/>
            <person name="Barrell B.G."/>
            <person name="Fraser C.M."/>
            <person name="Hall N."/>
        </authorList>
    </citation>
    <scope>NUCLEOTIDE SEQUENCE [LARGE SCALE GENOMIC DNA]</scope>
    <source>
        <strain evidence="10">ATCC 30459 / HM-1:IMSS / ABRM</strain>
    </source>
</reference>
<reference evidence="10" key="2">
    <citation type="submission" date="2007-03" db="EMBL/GenBank/DDBJ databases">
        <authorList>
            <person name="Lorenzi H."/>
            <person name="Amedeo P."/>
            <person name="Inman J."/>
            <person name="Schobel S."/>
            <person name="Caler E."/>
        </authorList>
    </citation>
    <scope>GENOME REANNOTATION</scope>
    <source>
        <strain evidence="10">ATCC 30459 / HM-1:IMSS / ABRM</strain>
    </source>
</reference>
<reference evidence="7" key="3">
    <citation type="journal article" date="2003" name="Parasite Immunol.">
        <title>Consumption of L-arginine mediated by Entamoeba histolytica L-arginase (EhArg) inhibits amoebicidal activity and nitric oxide production by activated macrophages.</title>
        <authorList>
            <person name="Elnekave K."/>
            <person name="Siman-Tov R."/>
            <person name="Ankri S."/>
        </authorList>
    </citation>
    <scope>FUNCTION</scope>
    <scope>CATALYTIC ACTIVITY</scope>
    <scope>ACTIVITY REGULATION</scope>
    <scope>BIOPHYSICOCHEMICAL PROPERTIES</scope>
    <scope>PATHWAY</scope>
</reference>
<reference evidence="7" key="4">
    <citation type="journal article" date="2018" name="Metallomics">
        <title>Biochemical and biophysical insights into the metal binding spectrum and bioactivity of arginase of Entamoeba histolytica.</title>
        <authorList>
            <person name="Malik A."/>
            <person name="Singh H."/>
            <person name="Pareek A."/>
            <person name="Tomar S."/>
        </authorList>
    </citation>
    <scope>FUNCTION</scope>
    <scope>CATALYTIC ACTIVITY</scope>
    <scope>COFACTOR</scope>
    <scope>ACTIVITY REGULATION</scope>
    <scope>BIOPHYSICOCHEMICAL PROPERTIES</scope>
    <scope>SUBUNIT</scope>
</reference>
<reference evidence="11 12 13" key="5">
    <citation type="journal article" date="2019" name="FEBS J.">
        <title>Structural insights into Entamoebahistolytica arginase and structure-based identification of novel non-amino acid based inhibitors as potential antiamoebic molecules.</title>
        <authorList>
            <person name="Malik A."/>
            <person name="Dalal V."/>
            <person name="Ankri S."/>
            <person name="Tomar S."/>
        </authorList>
    </citation>
    <scope>X-RAY CRYSTALLOGRAPHY (1.74 ANGSTROMS) IN COMPLEX WITH MANGENESE AND INHIBITORS</scope>
    <scope>FUNCTION</scope>
    <scope>CATALYTIC ACTIVITY</scope>
    <scope>COFACTOR</scope>
    <scope>SUBUNIT</scope>
</reference>
<comment type="function">
    <text evidence="3 4 5">Catalyzes the hydrolysis of L-arginine into urea and L-ornithine, which is a precursor for polyamine biosynthesis (PubMed:15053781, PubMed:29691540, PubMed:31199070). By depleting host L-arginine, a substrate for nitric oxide synthase (NOS), prevents the production of nitric oxide (NO) by host activated macrophages, and thus allows the parasite to evade host immune response (PubMed:15053781).</text>
</comment>
<comment type="catalytic activity">
    <reaction evidence="2 3 4 5">
        <text>L-arginine + H2O = urea + L-ornithine</text>
        <dbReference type="Rhea" id="RHEA:20569"/>
        <dbReference type="ChEBI" id="CHEBI:15377"/>
        <dbReference type="ChEBI" id="CHEBI:16199"/>
        <dbReference type="ChEBI" id="CHEBI:32682"/>
        <dbReference type="ChEBI" id="CHEBI:46911"/>
        <dbReference type="EC" id="3.5.3.1"/>
    </reaction>
</comment>
<comment type="cofactor">
    <cofactor evidence="2 4">
        <name>Mn(2+)</name>
        <dbReference type="ChEBI" id="CHEBI:29035"/>
    </cofactor>
    <text evidence="2 4 5">Binds 2 manganese ions per subunit.</text>
</comment>
<comment type="activity regulation">
    <text evidence="3 4">Substitution of the loosely bound surface exposed Mn(2+) with Mg(2+), Zn(2+), Ni(2+) or Co(2+) results in similar catalytic activity, substitution with Cd(2+) and Cu(2+) reduces catalytic activity and substitution with Hg(2+) and Ca(2+) inhibits the enzyme (PubMed:29691540). Inhibited by L-norvaline (PubMed:15053781, PubMed:29691540).</text>
</comment>
<comment type="biophysicochemical properties">
    <kinetics>
        <KM evidence="3">137 mM for L-arginine (at pH 7.5 and 37 degrees Celsius)</KM>
    </kinetics>
    <phDependence>
        <text evidence="4">Optimum pH is 8.5-9.</text>
    </phDependence>
    <temperatureDependence>
        <text evidence="4">Optimum temperature is 55 degrees Celsius (PubMed:29691540). Active up to 70 degrees Celsius (PubMed:29691540).</text>
    </temperatureDependence>
</comment>
<comment type="pathway">
    <text evidence="8">Nitrogen metabolism; urea cycle; L-ornithine and urea from L-arginine: step 1/1.</text>
</comment>
<comment type="subunit">
    <text evidence="4 5">Monomer (PubMed:29691540, PubMed:31199070). Homodimer; dimerization is dispensable for catalytic activity (PubMed:29691540, PubMed:31199070).</text>
</comment>
<comment type="similarity">
    <text evidence="1 2">Belongs to the arginase family.</text>
</comment>
<protein>
    <recommendedName>
        <fullName evidence="2 6">Arginase</fullName>
        <shortName evidence="6">EhArg</shortName>
        <ecNumber evidence="2 3 4 5">3.5.3.1</ecNumber>
    </recommendedName>
</protein>
<organism>
    <name type="scientific">Entamoeba histolytica (strain ATCC 30459 / HM-1:IMSS / ABRM)</name>
    <dbReference type="NCBI Taxonomy" id="294381"/>
    <lineage>
        <taxon>Eukaryota</taxon>
        <taxon>Amoebozoa</taxon>
        <taxon>Evosea</taxon>
        <taxon>Archamoebae</taxon>
        <taxon>Mastigamoebida</taxon>
        <taxon>Entamoebidae</taxon>
        <taxon>Entamoeba</taxon>
    </lineage>
</organism>
<gene>
    <name evidence="6" type="primary">ARG</name>
    <name evidence="10" type="ORF">EHI_152330</name>
</gene>
<dbReference type="EC" id="3.5.3.1" evidence="2 3 4 5"/>
<dbReference type="EMBL" id="DS571145">
    <property type="protein sequence ID" value="EAL51512.1"/>
    <property type="molecule type" value="Genomic_DNA"/>
</dbReference>
<dbReference type="RefSeq" id="XP_656978.1">
    <property type="nucleotide sequence ID" value="XM_651886.1"/>
</dbReference>
<dbReference type="PDB" id="5ZEE">
    <property type="method" value="X-ray"/>
    <property type="resolution" value="1.74 A"/>
    <property type="chains" value="A/B=1-296"/>
</dbReference>
<dbReference type="PDB" id="5ZEF">
    <property type="method" value="X-ray"/>
    <property type="resolution" value="2.01 A"/>
    <property type="chains" value="A/B=1-296"/>
</dbReference>
<dbReference type="PDB" id="5ZEH">
    <property type="method" value="X-ray"/>
    <property type="resolution" value="2.36 A"/>
    <property type="chains" value="A/B=1-296"/>
</dbReference>
<dbReference type="PDBsum" id="5ZEE"/>
<dbReference type="PDBsum" id="5ZEF"/>
<dbReference type="PDBsum" id="5ZEH"/>
<dbReference type="SMR" id="C4LSS0"/>
<dbReference type="STRING" id="5759.C4LSS0"/>
<dbReference type="EnsemblProtists" id="GAT91485">
    <property type="protein sequence ID" value="GAT91485"/>
    <property type="gene ID" value="CL6EHI_152330"/>
</dbReference>
<dbReference type="EnsemblProtists" id="rna_EHI_152330-1">
    <property type="protein sequence ID" value="rna_EHI_152330-1"/>
    <property type="gene ID" value="EHI_152330"/>
</dbReference>
<dbReference type="GeneID" id="3411304"/>
<dbReference type="KEGG" id="ehi:EHI_152330"/>
<dbReference type="VEuPathDB" id="AmoebaDB:EHI5A_000930"/>
<dbReference type="VEuPathDB" id="AmoebaDB:EHI7A_074530"/>
<dbReference type="VEuPathDB" id="AmoebaDB:EHI8A_076540"/>
<dbReference type="VEuPathDB" id="AmoebaDB:EHI_152330"/>
<dbReference type="VEuPathDB" id="AmoebaDB:KM1_001650"/>
<dbReference type="eggNOG" id="KOG2965">
    <property type="taxonomic scope" value="Eukaryota"/>
</dbReference>
<dbReference type="HOGENOM" id="CLU_039478_6_2_1"/>
<dbReference type="InParanoid" id="C4LSS0"/>
<dbReference type="OMA" id="YKEFRYA"/>
<dbReference type="OrthoDB" id="25260at2759"/>
<dbReference type="BRENDA" id="3.5.3.1">
    <property type="organism ID" value="2080"/>
</dbReference>
<dbReference type="UniPathway" id="UPA00158">
    <property type="reaction ID" value="UER00270"/>
</dbReference>
<dbReference type="Proteomes" id="UP000001926">
    <property type="component" value="Partially assembled WGS sequence"/>
</dbReference>
<dbReference type="GO" id="GO:0005737">
    <property type="term" value="C:cytoplasm"/>
    <property type="evidence" value="ECO:0000318"/>
    <property type="project" value="GO_Central"/>
</dbReference>
<dbReference type="GO" id="GO:0005829">
    <property type="term" value="C:cytosol"/>
    <property type="evidence" value="ECO:0000318"/>
    <property type="project" value="GO_Central"/>
</dbReference>
<dbReference type="GO" id="GO:0004053">
    <property type="term" value="F:arginase activity"/>
    <property type="evidence" value="ECO:0000314"/>
    <property type="project" value="UniProtKB"/>
</dbReference>
<dbReference type="GO" id="GO:0042802">
    <property type="term" value="F:identical protein binding"/>
    <property type="evidence" value="ECO:0000314"/>
    <property type="project" value="UniProtKB"/>
</dbReference>
<dbReference type="GO" id="GO:0030145">
    <property type="term" value="F:manganese ion binding"/>
    <property type="evidence" value="ECO:0000314"/>
    <property type="project" value="UniProtKB"/>
</dbReference>
<dbReference type="GO" id="GO:0019547">
    <property type="term" value="P:arginine catabolic process to ornithine"/>
    <property type="evidence" value="ECO:0000314"/>
    <property type="project" value="UniProtKB"/>
</dbReference>
<dbReference type="GO" id="GO:0000050">
    <property type="term" value="P:urea cycle"/>
    <property type="evidence" value="ECO:0007669"/>
    <property type="project" value="UniProtKB-UniPathway"/>
</dbReference>
<dbReference type="CDD" id="cd09989">
    <property type="entry name" value="Arginase"/>
    <property type="match status" value="1"/>
</dbReference>
<dbReference type="FunFam" id="3.40.800.10:FF:000021">
    <property type="entry name" value="Arginase"/>
    <property type="match status" value="1"/>
</dbReference>
<dbReference type="Gene3D" id="3.40.800.10">
    <property type="entry name" value="Ureohydrolase domain"/>
    <property type="match status" value="1"/>
</dbReference>
<dbReference type="InterPro" id="IPR014033">
    <property type="entry name" value="Arginase"/>
</dbReference>
<dbReference type="InterPro" id="IPR006035">
    <property type="entry name" value="Ureohydrolase"/>
</dbReference>
<dbReference type="InterPro" id="IPR023696">
    <property type="entry name" value="Ureohydrolase_dom_sf"/>
</dbReference>
<dbReference type="NCBIfam" id="TIGR01229">
    <property type="entry name" value="rocF_arginase"/>
    <property type="match status" value="1"/>
</dbReference>
<dbReference type="PANTHER" id="PTHR43782">
    <property type="entry name" value="ARGINASE"/>
    <property type="match status" value="1"/>
</dbReference>
<dbReference type="PANTHER" id="PTHR43782:SF3">
    <property type="entry name" value="ARGINASE"/>
    <property type="match status" value="1"/>
</dbReference>
<dbReference type="Pfam" id="PF00491">
    <property type="entry name" value="Arginase"/>
    <property type="match status" value="1"/>
</dbReference>
<dbReference type="PRINTS" id="PR00116">
    <property type="entry name" value="ARGINASE"/>
</dbReference>
<dbReference type="SUPFAM" id="SSF52768">
    <property type="entry name" value="Arginase/deacetylase"/>
    <property type="match status" value="1"/>
</dbReference>
<dbReference type="PROSITE" id="PS51409">
    <property type="entry name" value="ARGINASE_2"/>
    <property type="match status" value="1"/>
</dbReference>
<sequence>MQFEKVTYIAVPQKYGQKKVGVEEGPKFLEKLGFMNVLEQVAKSVNKKTITEPKTPQELGVTNARNLNEVESVNIELRDTIAKEYDVNNLLINIGGDHSIGLGTIAGVVKAMKPNARVGVVWFDAHPDMNTPENSPSGNIHGMPLACAVGLGPQRLTSIMPHYITPKDIMYVGIRSIDVGEQFEIQDKHIDHFTAEDVKRVGMKEVIEAINKKFVDYDVIHLSFDIDGIDPEFILGTGTPVPKGISLEDSLYFMSEMGKMKKLHSVDIVEYNPKIEEEITGKNVLKCISSLFGIKC</sequence>
<keyword id="KW-0002">3D-structure</keyword>
<keyword id="KW-0056">Arginine metabolism</keyword>
<keyword id="KW-0378">Hydrolase</keyword>
<keyword id="KW-0464">Manganese</keyword>
<keyword id="KW-0479">Metal-binding</keyword>
<keyword id="KW-1185">Reference proteome</keyword>
<accession>C4LSS0</accession>
<accession>A0A175JD45</accession>
<name>ARGI_ENTH1</name>
<feature type="chain" id="PRO_0000457083" description="Arginase">
    <location>
        <begin position="1"/>
        <end position="296"/>
    </location>
</feature>
<feature type="binding site" evidence="5 11 12 13">
    <location>
        <position position="98"/>
    </location>
    <ligand>
        <name>Mn(2+)</name>
        <dbReference type="ChEBI" id="CHEBI:29035"/>
        <label>2</label>
    </ligand>
</feature>
<feature type="binding site" evidence="5 11 12 13">
    <location>
        <position position="124"/>
    </location>
    <ligand>
        <name>Mn(2+)</name>
        <dbReference type="ChEBI" id="CHEBI:29035"/>
        <label>1</label>
    </ligand>
</feature>
<feature type="binding site" evidence="5 11 12 13">
    <location>
        <position position="124"/>
    </location>
    <ligand>
        <name>Mn(2+)</name>
        <dbReference type="ChEBI" id="CHEBI:29035"/>
        <label>2</label>
    </ligand>
</feature>
<feature type="binding site" evidence="5 11 12 13">
    <location>
        <position position="126"/>
    </location>
    <ligand>
        <name>Mn(2+)</name>
        <dbReference type="ChEBI" id="CHEBI:29035"/>
        <label>1</label>
    </ligand>
</feature>
<feature type="binding site" evidence="5 11 12 13">
    <location>
        <position position="128"/>
    </location>
    <ligand>
        <name>Mn(2+)</name>
        <dbReference type="ChEBI" id="CHEBI:29035"/>
        <label>2</label>
    </ligand>
</feature>
<feature type="binding site" evidence="9 11 12 13">
    <location>
        <position position="130"/>
    </location>
    <ligand>
        <name>L-arginine</name>
        <dbReference type="ChEBI" id="CHEBI:32682"/>
    </ligand>
</feature>
<feature type="binding site" evidence="9 11 12 13">
    <location>
        <position position="137"/>
    </location>
    <ligand>
        <name>L-arginine</name>
        <dbReference type="ChEBI" id="CHEBI:32682"/>
    </ligand>
</feature>
<feature type="binding site" evidence="9 11 12 13">
    <location>
        <position position="178"/>
    </location>
    <ligand>
        <name>L-arginine</name>
        <dbReference type="ChEBI" id="CHEBI:32682"/>
    </ligand>
</feature>
<feature type="binding site" evidence="5 11 12 13">
    <location>
        <position position="225"/>
    </location>
    <ligand>
        <name>Mn(2+)</name>
        <dbReference type="ChEBI" id="CHEBI:29035"/>
        <label>1</label>
    </ligand>
</feature>
<feature type="binding site" evidence="5 11 12 13">
    <location>
        <position position="225"/>
    </location>
    <ligand>
        <name>Mn(2+)</name>
        <dbReference type="ChEBI" id="CHEBI:29035"/>
        <label>2</label>
    </ligand>
</feature>
<feature type="binding site" evidence="9 11">
    <location>
        <position position="227"/>
    </location>
    <ligand>
        <name>L-arginine</name>
        <dbReference type="ChEBI" id="CHEBI:32682"/>
    </ligand>
</feature>
<feature type="binding site" evidence="5 11 12 13">
    <location>
        <position position="227"/>
    </location>
    <ligand>
        <name>Mn(2+)</name>
        <dbReference type="ChEBI" id="CHEBI:29035"/>
        <label>1</label>
    </ligand>
</feature>
<feature type="binding site" evidence="9 11 12 13">
    <location>
        <position position="239"/>
    </location>
    <ligand>
        <name>L-arginine</name>
        <dbReference type="ChEBI" id="CHEBI:32682"/>
    </ligand>
</feature>
<feature type="strand" evidence="14">
    <location>
        <begin position="4"/>
        <end position="11"/>
    </location>
</feature>
<feature type="helix" evidence="14">
    <location>
        <begin position="22"/>
        <end position="24"/>
    </location>
</feature>
<feature type="helix" evidence="14">
    <location>
        <begin position="25"/>
        <end position="31"/>
    </location>
</feature>
<feature type="helix" evidence="14">
    <location>
        <begin position="34"/>
        <end position="39"/>
    </location>
</feature>
<feature type="strand" evidence="14">
    <location>
        <begin position="43"/>
        <end position="49"/>
    </location>
</feature>
<feature type="helix" evidence="14">
    <location>
        <begin position="67"/>
        <end position="84"/>
    </location>
</feature>
<feature type="strand" evidence="14">
    <location>
        <begin position="89"/>
        <end position="96"/>
    </location>
</feature>
<feature type="helix" evidence="14">
    <location>
        <begin position="100"/>
        <end position="111"/>
    </location>
</feature>
<feature type="strand" evidence="14">
    <location>
        <begin position="118"/>
        <end position="126"/>
    </location>
</feature>
<feature type="turn" evidence="14">
    <location>
        <begin position="132"/>
        <end position="134"/>
    </location>
</feature>
<feature type="helix" evidence="14">
    <location>
        <begin position="140"/>
        <end position="142"/>
    </location>
</feature>
<feature type="helix" evidence="14">
    <location>
        <begin position="144"/>
        <end position="148"/>
    </location>
</feature>
<feature type="helix" evidence="14">
    <location>
        <begin position="154"/>
        <end position="157"/>
    </location>
</feature>
<feature type="strand" evidence="14">
    <location>
        <begin position="160"/>
        <end position="162"/>
    </location>
</feature>
<feature type="helix" evidence="14">
    <location>
        <begin position="166"/>
        <end position="168"/>
    </location>
</feature>
<feature type="strand" evidence="14">
    <location>
        <begin position="169"/>
        <end position="174"/>
    </location>
</feature>
<feature type="helix" evidence="14">
    <location>
        <begin position="179"/>
        <end position="187"/>
    </location>
</feature>
<feature type="strand" evidence="14">
    <location>
        <begin position="191"/>
        <end position="194"/>
    </location>
</feature>
<feature type="helix" evidence="14">
    <location>
        <begin position="195"/>
        <end position="201"/>
    </location>
</feature>
<feature type="helix" evidence="14">
    <location>
        <begin position="203"/>
        <end position="213"/>
    </location>
</feature>
<feature type="turn" evidence="14">
    <location>
        <begin position="214"/>
        <end position="216"/>
    </location>
</feature>
<feature type="strand" evidence="14">
    <location>
        <begin position="218"/>
        <end position="225"/>
    </location>
</feature>
<feature type="helix" evidence="14">
    <location>
        <begin position="226"/>
        <end position="228"/>
    </location>
</feature>
<feature type="turn" evidence="14">
    <location>
        <begin position="231"/>
        <end position="233"/>
    </location>
</feature>
<feature type="strand" evidence="14">
    <location>
        <begin position="236"/>
        <end position="239"/>
    </location>
</feature>
<feature type="helix" evidence="14">
    <location>
        <begin position="247"/>
        <end position="258"/>
    </location>
</feature>
<feature type="strand" evidence="14">
    <location>
        <begin position="263"/>
        <end position="269"/>
    </location>
</feature>
<feature type="turn" evidence="14">
    <location>
        <begin position="273"/>
        <end position="275"/>
    </location>
</feature>
<feature type="helix" evidence="14">
    <location>
        <begin position="278"/>
        <end position="291"/>
    </location>
</feature>
<proteinExistence type="evidence at protein level"/>